<feature type="chain" id="PRO_1000140997" description="Small ribosomal subunit protein uS3">
    <location>
        <begin position="1"/>
        <end position="210"/>
    </location>
</feature>
<feature type="domain" description="KH type-2" evidence="1">
    <location>
        <begin position="39"/>
        <end position="107"/>
    </location>
</feature>
<dbReference type="EMBL" id="CP001032">
    <property type="protein sequence ID" value="ACB73511.1"/>
    <property type="molecule type" value="Genomic_DNA"/>
</dbReference>
<dbReference type="RefSeq" id="WP_012373049.1">
    <property type="nucleotide sequence ID" value="NC_010571.1"/>
</dbReference>
<dbReference type="SMR" id="B1ZNE2"/>
<dbReference type="STRING" id="452637.Oter_0220"/>
<dbReference type="KEGG" id="ote:Oter_0220"/>
<dbReference type="eggNOG" id="COG0092">
    <property type="taxonomic scope" value="Bacteria"/>
</dbReference>
<dbReference type="HOGENOM" id="CLU_058591_0_2_0"/>
<dbReference type="OrthoDB" id="9806396at2"/>
<dbReference type="Proteomes" id="UP000007013">
    <property type="component" value="Chromosome"/>
</dbReference>
<dbReference type="GO" id="GO:0022627">
    <property type="term" value="C:cytosolic small ribosomal subunit"/>
    <property type="evidence" value="ECO:0007669"/>
    <property type="project" value="TreeGrafter"/>
</dbReference>
<dbReference type="GO" id="GO:0003729">
    <property type="term" value="F:mRNA binding"/>
    <property type="evidence" value="ECO:0007669"/>
    <property type="project" value="UniProtKB-UniRule"/>
</dbReference>
<dbReference type="GO" id="GO:0019843">
    <property type="term" value="F:rRNA binding"/>
    <property type="evidence" value="ECO:0007669"/>
    <property type="project" value="UniProtKB-UniRule"/>
</dbReference>
<dbReference type="GO" id="GO:0003735">
    <property type="term" value="F:structural constituent of ribosome"/>
    <property type="evidence" value="ECO:0007669"/>
    <property type="project" value="InterPro"/>
</dbReference>
<dbReference type="GO" id="GO:0006412">
    <property type="term" value="P:translation"/>
    <property type="evidence" value="ECO:0007669"/>
    <property type="project" value="UniProtKB-UniRule"/>
</dbReference>
<dbReference type="CDD" id="cd02412">
    <property type="entry name" value="KH-II_30S_S3"/>
    <property type="match status" value="1"/>
</dbReference>
<dbReference type="FunFam" id="3.30.300.20:FF:000001">
    <property type="entry name" value="30S ribosomal protein S3"/>
    <property type="match status" value="1"/>
</dbReference>
<dbReference type="Gene3D" id="3.30.300.20">
    <property type="match status" value="1"/>
</dbReference>
<dbReference type="Gene3D" id="3.30.1140.32">
    <property type="entry name" value="Ribosomal protein S3, C-terminal domain"/>
    <property type="match status" value="1"/>
</dbReference>
<dbReference type="HAMAP" id="MF_01309_B">
    <property type="entry name" value="Ribosomal_uS3_B"/>
    <property type="match status" value="1"/>
</dbReference>
<dbReference type="InterPro" id="IPR004087">
    <property type="entry name" value="KH_dom"/>
</dbReference>
<dbReference type="InterPro" id="IPR015946">
    <property type="entry name" value="KH_dom-like_a/b"/>
</dbReference>
<dbReference type="InterPro" id="IPR004044">
    <property type="entry name" value="KH_dom_type_2"/>
</dbReference>
<dbReference type="InterPro" id="IPR009019">
    <property type="entry name" value="KH_sf_prok-type"/>
</dbReference>
<dbReference type="InterPro" id="IPR036419">
    <property type="entry name" value="Ribosomal_S3_C_sf"/>
</dbReference>
<dbReference type="InterPro" id="IPR005704">
    <property type="entry name" value="Ribosomal_uS3_bac-typ"/>
</dbReference>
<dbReference type="InterPro" id="IPR001351">
    <property type="entry name" value="Ribosomal_uS3_C"/>
</dbReference>
<dbReference type="InterPro" id="IPR018280">
    <property type="entry name" value="Ribosomal_uS3_CS"/>
</dbReference>
<dbReference type="NCBIfam" id="TIGR01009">
    <property type="entry name" value="rpsC_bact"/>
    <property type="match status" value="1"/>
</dbReference>
<dbReference type="PANTHER" id="PTHR11760">
    <property type="entry name" value="30S/40S RIBOSOMAL PROTEIN S3"/>
    <property type="match status" value="1"/>
</dbReference>
<dbReference type="PANTHER" id="PTHR11760:SF19">
    <property type="entry name" value="SMALL RIBOSOMAL SUBUNIT PROTEIN US3C"/>
    <property type="match status" value="1"/>
</dbReference>
<dbReference type="Pfam" id="PF07650">
    <property type="entry name" value="KH_2"/>
    <property type="match status" value="1"/>
</dbReference>
<dbReference type="Pfam" id="PF00189">
    <property type="entry name" value="Ribosomal_S3_C"/>
    <property type="match status" value="1"/>
</dbReference>
<dbReference type="SMART" id="SM00322">
    <property type="entry name" value="KH"/>
    <property type="match status" value="1"/>
</dbReference>
<dbReference type="SUPFAM" id="SSF54814">
    <property type="entry name" value="Prokaryotic type KH domain (KH-domain type II)"/>
    <property type="match status" value="1"/>
</dbReference>
<dbReference type="SUPFAM" id="SSF54821">
    <property type="entry name" value="Ribosomal protein S3 C-terminal domain"/>
    <property type="match status" value="1"/>
</dbReference>
<dbReference type="PROSITE" id="PS50823">
    <property type="entry name" value="KH_TYPE_2"/>
    <property type="match status" value="1"/>
</dbReference>
<dbReference type="PROSITE" id="PS00548">
    <property type="entry name" value="RIBOSOMAL_S3"/>
    <property type="match status" value="1"/>
</dbReference>
<accession>B1ZNE2</accession>
<protein>
    <recommendedName>
        <fullName evidence="1">Small ribosomal subunit protein uS3</fullName>
    </recommendedName>
    <alternativeName>
        <fullName evidence="2">30S ribosomal protein S3</fullName>
    </alternativeName>
</protein>
<reference key="1">
    <citation type="journal article" date="2011" name="J. Bacteriol.">
        <title>Genome sequence of the verrucomicrobium Opitutus terrae PB90-1, an abundant inhabitant of rice paddy soil ecosystems.</title>
        <authorList>
            <person name="van Passel M.W."/>
            <person name="Kant R."/>
            <person name="Palva A."/>
            <person name="Copeland A."/>
            <person name="Lucas S."/>
            <person name="Lapidus A."/>
            <person name="Glavina del Rio T."/>
            <person name="Pitluck S."/>
            <person name="Goltsman E."/>
            <person name="Clum A."/>
            <person name="Sun H."/>
            <person name="Schmutz J."/>
            <person name="Larimer F.W."/>
            <person name="Land M.L."/>
            <person name="Hauser L."/>
            <person name="Kyrpides N."/>
            <person name="Mikhailova N."/>
            <person name="Richardson P.P."/>
            <person name="Janssen P.H."/>
            <person name="de Vos W.M."/>
            <person name="Smidt H."/>
        </authorList>
    </citation>
    <scope>NUCLEOTIDE SEQUENCE [LARGE SCALE GENOMIC DNA]</scope>
    <source>
        <strain>DSM 11246 / JCM 15787 / PB90-1</strain>
    </source>
</reference>
<name>RS3_OPITP</name>
<organism>
    <name type="scientific">Opitutus terrae (strain DSM 11246 / JCM 15787 / PB90-1)</name>
    <dbReference type="NCBI Taxonomy" id="452637"/>
    <lineage>
        <taxon>Bacteria</taxon>
        <taxon>Pseudomonadati</taxon>
        <taxon>Verrucomicrobiota</taxon>
        <taxon>Opitutia</taxon>
        <taxon>Opitutales</taxon>
        <taxon>Opitutaceae</taxon>
        <taxon>Opitutus</taxon>
    </lineage>
</organism>
<evidence type="ECO:0000255" key="1">
    <source>
        <dbReference type="HAMAP-Rule" id="MF_01309"/>
    </source>
</evidence>
<evidence type="ECO:0000305" key="2"/>
<gene>
    <name evidence="1" type="primary">rpsC</name>
    <name type="ordered locus">Oter_0220</name>
</gene>
<comment type="function">
    <text evidence="1">Binds the lower part of the 30S subunit head. Binds mRNA in the 70S ribosome, positioning it for translation.</text>
</comment>
<comment type="subunit">
    <text evidence="1">Part of the 30S ribosomal subunit. Forms a tight complex with proteins S10 and S14.</text>
</comment>
<comment type="similarity">
    <text evidence="1">Belongs to the universal ribosomal protein uS3 family.</text>
</comment>
<sequence length="210" mass="24257">MGQKTNPTGFRLAVRRNWQSRWYATKKDFPKLLEEDQIIREKLMEKLKQASVPRIFIERASNRVRVKIYTARPGIVIGRKGQEIEKIKEELAKLTGKEILLDIQEVKKPEIEAQLVAENVALQLERRIAFRRAMKKAVEMAMTLGAEGIRIQCSGRLGGADIARREWQRKGRVPLHTLRENIDYGFSEAHTVYGKIGVKCWICKKESDNN</sequence>
<proteinExistence type="inferred from homology"/>
<keyword id="KW-1185">Reference proteome</keyword>
<keyword id="KW-0687">Ribonucleoprotein</keyword>
<keyword id="KW-0689">Ribosomal protein</keyword>
<keyword id="KW-0694">RNA-binding</keyword>
<keyword id="KW-0699">rRNA-binding</keyword>